<keyword id="KW-0143">Chaperone</keyword>
<keyword id="KW-0963">Cytoplasm</keyword>
<keyword id="KW-0533">Nickel</keyword>
<keyword id="KW-0996">Nickel insertion</keyword>
<name>UREE_PSEAB</name>
<proteinExistence type="inferred from homology"/>
<sequence>MLVIHQRLPARSPRWDEELHLTYEARSKSRLRCFAASGEEVGLFLERGQPPLADGDCLEARDGRLVRVVARPERLLHVTCASPLELTRAAYHLGNRHVALQVGDGWLRLLDDYVLKAMLEQLGATVEAIEAPFQPEHGAYGGGHHHSHHGEAEFNYAPRLHQFGVRR</sequence>
<comment type="function">
    <text evidence="1">Involved in urease metallocenter assembly. Binds nickel. Probably functions as a nickel donor during metallocenter assembly.</text>
</comment>
<comment type="subcellular location">
    <subcellularLocation>
        <location evidence="1">Cytoplasm</location>
    </subcellularLocation>
</comment>
<comment type="similarity">
    <text evidence="1">Belongs to the UreE family.</text>
</comment>
<evidence type="ECO:0000255" key="1">
    <source>
        <dbReference type="HAMAP-Rule" id="MF_00822"/>
    </source>
</evidence>
<dbReference type="EMBL" id="CP000438">
    <property type="protein sequence ID" value="ABJ14276.1"/>
    <property type="molecule type" value="Genomic_DNA"/>
</dbReference>
<dbReference type="RefSeq" id="WP_003135457.1">
    <property type="nucleotide sequence ID" value="NZ_CP034244.1"/>
</dbReference>
<dbReference type="SMR" id="Q02FC7"/>
<dbReference type="KEGG" id="pau:PA14_64650"/>
<dbReference type="PseudoCAP" id="PA14_64650"/>
<dbReference type="HOGENOM" id="CLU_093757_2_0_6"/>
<dbReference type="BioCyc" id="PAER208963:G1G74-5463-MONOMER"/>
<dbReference type="Proteomes" id="UP000000653">
    <property type="component" value="Chromosome"/>
</dbReference>
<dbReference type="GO" id="GO:0005737">
    <property type="term" value="C:cytoplasm"/>
    <property type="evidence" value="ECO:0007669"/>
    <property type="project" value="UniProtKB-SubCell"/>
</dbReference>
<dbReference type="GO" id="GO:0016151">
    <property type="term" value="F:nickel cation binding"/>
    <property type="evidence" value="ECO:0007669"/>
    <property type="project" value="UniProtKB-UniRule"/>
</dbReference>
<dbReference type="GO" id="GO:0051082">
    <property type="term" value="F:unfolded protein binding"/>
    <property type="evidence" value="ECO:0007669"/>
    <property type="project" value="UniProtKB-UniRule"/>
</dbReference>
<dbReference type="GO" id="GO:0006457">
    <property type="term" value="P:protein folding"/>
    <property type="evidence" value="ECO:0007669"/>
    <property type="project" value="InterPro"/>
</dbReference>
<dbReference type="GO" id="GO:0065003">
    <property type="term" value="P:protein-containing complex assembly"/>
    <property type="evidence" value="ECO:0007669"/>
    <property type="project" value="InterPro"/>
</dbReference>
<dbReference type="GO" id="GO:0019627">
    <property type="term" value="P:urea metabolic process"/>
    <property type="evidence" value="ECO:0007669"/>
    <property type="project" value="InterPro"/>
</dbReference>
<dbReference type="CDD" id="cd00571">
    <property type="entry name" value="UreE"/>
    <property type="match status" value="1"/>
</dbReference>
<dbReference type="Gene3D" id="2.60.260.20">
    <property type="entry name" value="Urease metallochaperone UreE, N-terminal domain"/>
    <property type="match status" value="1"/>
</dbReference>
<dbReference type="Gene3D" id="3.30.70.790">
    <property type="entry name" value="UreE, C-terminal domain"/>
    <property type="match status" value="1"/>
</dbReference>
<dbReference type="HAMAP" id="MF_00822">
    <property type="entry name" value="UreE"/>
    <property type="match status" value="1"/>
</dbReference>
<dbReference type="InterPro" id="IPR012406">
    <property type="entry name" value="UreE"/>
</dbReference>
<dbReference type="InterPro" id="IPR007864">
    <property type="entry name" value="UreE_C_dom"/>
</dbReference>
<dbReference type="InterPro" id="IPR004029">
    <property type="entry name" value="UreE_N"/>
</dbReference>
<dbReference type="InterPro" id="IPR036118">
    <property type="entry name" value="UreE_N_sf"/>
</dbReference>
<dbReference type="NCBIfam" id="NF009751">
    <property type="entry name" value="PRK13261.1-1"/>
    <property type="match status" value="1"/>
</dbReference>
<dbReference type="NCBIfam" id="NF009753">
    <property type="entry name" value="PRK13261.1-5"/>
    <property type="match status" value="1"/>
</dbReference>
<dbReference type="Pfam" id="PF05194">
    <property type="entry name" value="UreE_C"/>
    <property type="match status" value="1"/>
</dbReference>
<dbReference type="Pfam" id="PF02814">
    <property type="entry name" value="UreE_N"/>
    <property type="match status" value="1"/>
</dbReference>
<dbReference type="PIRSF" id="PIRSF036402">
    <property type="entry name" value="Ureas_acces_UreE"/>
    <property type="match status" value="1"/>
</dbReference>
<dbReference type="SMART" id="SM00988">
    <property type="entry name" value="UreE_N"/>
    <property type="match status" value="1"/>
</dbReference>
<dbReference type="SUPFAM" id="SSF69737">
    <property type="entry name" value="Urease metallochaperone UreE, C-terminal domain"/>
    <property type="match status" value="1"/>
</dbReference>
<dbReference type="SUPFAM" id="SSF69287">
    <property type="entry name" value="Urease metallochaperone UreE, N-terminal domain"/>
    <property type="match status" value="1"/>
</dbReference>
<reference key="1">
    <citation type="journal article" date="2006" name="Genome Biol.">
        <title>Genomic analysis reveals that Pseudomonas aeruginosa virulence is combinatorial.</title>
        <authorList>
            <person name="Lee D.G."/>
            <person name="Urbach J.M."/>
            <person name="Wu G."/>
            <person name="Liberati N.T."/>
            <person name="Feinbaum R.L."/>
            <person name="Miyata S."/>
            <person name="Diggins L.T."/>
            <person name="He J."/>
            <person name="Saucier M."/>
            <person name="Deziel E."/>
            <person name="Friedman L."/>
            <person name="Li L."/>
            <person name="Grills G."/>
            <person name="Montgomery K."/>
            <person name="Kucherlapati R."/>
            <person name="Rahme L.G."/>
            <person name="Ausubel F.M."/>
        </authorList>
    </citation>
    <scope>NUCLEOTIDE SEQUENCE [LARGE SCALE GENOMIC DNA]</scope>
    <source>
        <strain>UCBPP-PA14</strain>
    </source>
</reference>
<organism>
    <name type="scientific">Pseudomonas aeruginosa (strain UCBPP-PA14)</name>
    <dbReference type="NCBI Taxonomy" id="208963"/>
    <lineage>
        <taxon>Bacteria</taxon>
        <taxon>Pseudomonadati</taxon>
        <taxon>Pseudomonadota</taxon>
        <taxon>Gammaproteobacteria</taxon>
        <taxon>Pseudomonadales</taxon>
        <taxon>Pseudomonadaceae</taxon>
        <taxon>Pseudomonas</taxon>
    </lineage>
</organism>
<accession>Q02FC7</accession>
<protein>
    <recommendedName>
        <fullName evidence="1">Urease accessory protein UreE</fullName>
    </recommendedName>
</protein>
<gene>
    <name evidence="1" type="primary">ureE</name>
    <name type="ordered locus">PA14_64650</name>
</gene>
<feature type="chain" id="PRO_1000062555" description="Urease accessory protein UreE">
    <location>
        <begin position="1"/>
        <end position="167"/>
    </location>
</feature>